<proteinExistence type="inferred from homology"/>
<feature type="chain" id="PRO_0000413956" description="Rhomboid-type serine protease 2">
    <location>
        <begin position="1"/>
        <end position="503"/>
    </location>
</feature>
<feature type="topological domain" description="Cytoplasmic" evidence="2">
    <location>
        <begin position="1"/>
        <end position="136"/>
    </location>
</feature>
<feature type="transmembrane region" description="Helical" evidence="2">
    <location>
        <begin position="137"/>
        <end position="157"/>
    </location>
</feature>
<feature type="topological domain" description="Extracellular" evidence="2">
    <location>
        <begin position="158"/>
        <end position="253"/>
    </location>
</feature>
<feature type="transmembrane region" description="Helical" evidence="2">
    <location>
        <begin position="254"/>
        <end position="274"/>
    </location>
</feature>
<feature type="topological domain" description="Cytoplasmic" evidence="2">
    <location>
        <begin position="275"/>
        <end position="283"/>
    </location>
</feature>
<feature type="transmembrane region" description="Helical" evidence="2">
    <location>
        <begin position="284"/>
        <end position="304"/>
    </location>
</feature>
<feature type="topological domain" description="Extracellular" evidence="2">
    <location>
        <begin position="305"/>
        <end position="316"/>
    </location>
</feature>
<feature type="transmembrane region" description="Helical" evidence="2">
    <location>
        <begin position="317"/>
        <end position="337"/>
    </location>
</feature>
<feature type="topological domain" description="Cytoplasmic" evidence="2">
    <location>
        <begin position="338"/>
        <end position="342"/>
    </location>
</feature>
<feature type="transmembrane region" description="Helical" evidence="2">
    <location>
        <begin position="343"/>
        <end position="363"/>
    </location>
</feature>
<feature type="topological domain" description="Extracellular" evidence="2">
    <location>
        <begin position="364"/>
        <end position="365"/>
    </location>
</feature>
<feature type="transmembrane region" description="Helical" evidence="2">
    <location>
        <begin position="366"/>
        <end position="386"/>
    </location>
</feature>
<feature type="topological domain" description="Cytoplasmic" evidence="2">
    <location>
        <begin position="387"/>
        <end position="449"/>
    </location>
</feature>
<feature type="transmembrane region" description="Helical" evidence="2">
    <location>
        <begin position="450"/>
        <end position="470"/>
    </location>
</feature>
<feature type="topological domain" description="Extracellular" evidence="2">
    <location>
        <begin position="471"/>
        <end position="503"/>
    </location>
</feature>
<feature type="region of interest" description="Disordered" evidence="3">
    <location>
        <begin position="1"/>
        <end position="66"/>
    </location>
</feature>
<feature type="compositionally biased region" description="Polar residues" evidence="3">
    <location>
        <begin position="1"/>
        <end position="11"/>
    </location>
</feature>
<feature type="active site" description="Nucleophile" evidence="1">
    <location>
        <position position="319"/>
    </location>
</feature>
<feature type="active site" evidence="1">
    <location>
        <position position="371"/>
    </location>
</feature>
<reference key="1">
    <citation type="journal article" date="2005" name="Nature">
        <title>Sequencing of Aspergillus nidulans and comparative analysis with A. fumigatus and A. oryzae.</title>
        <authorList>
            <person name="Galagan J.E."/>
            <person name="Calvo S.E."/>
            <person name="Cuomo C."/>
            <person name="Ma L.-J."/>
            <person name="Wortman J.R."/>
            <person name="Batzoglou S."/>
            <person name="Lee S.-I."/>
            <person name="Bastuerkmen M."/>
            <person name="Spevak C.C."/>
            <person name="Clutterbuck J."/>
            <person name="Kapitonov V."/>
            <person name="Jurka J."/>
            <person name="Scazzocchio C."/>
            <person name="Farman M.L."/>
            <person name="Butler J."/>
            <person name="Purcell S."/>
            <person name="Harris S."/>
            <person name="Braus G.H."/>
            <person name="Draht O."/>
            <person name="Busch S."/>
            <person name="D'Enfert C."/>
            <person name="Bouchier C."/>
            <person name="Goldman G.H."/>
            <person name="Bell-Pedersen D."/>
            <person name="Griffiths-Jones S."/>
            <person name="Doonan J.H."/>
            <person name="Yu J."/>
            <person name="Vienken K."/>
            <person name="Pain A."/>
            <person name="Freitag M."/>
            <person name="Selker E.U."/>
            <person name="Archer D.B."/>
            <person name="Penalva M.A."/>
            <person name="Oakley B.R."/>
            <person name="Momany M."/>
            <person name="Tanaka T."/>
            <person name="Kumagai T."/>
            <person name="Asai K."/>
            <person name="Machida M."/>
            <person name="Nierman W.C."/>
            <person name="Denning D.W."/>
            <person name="Caddick M.X."/>
            <person name="Hynes M."/>
            <person name="Paoletti M."/>
            <person name="Fischer R."/>
            <person name="Miller B.L."/>
            <person name="Dyer P.S."/>
            <person name="Sachs M.S."/>
            <person name="Osmani S.A."/>
            <person name="Birren B.W."/>
        </authorList>
    </citation>
    <scope>NUCLEOTIDE SEQUENCE [LARGE SCALE GENOMIC DNA]</scope>
    <source>
        <strain>FGSC A4 / ATCC 38163 / CBS 112.46 / NRRL 194 / M139</strain>
    </source>
</reference>
<reference key="2">
    <citation type="journal article" date="2009" name="Fungal Genet. Biol.">
        <title>The 2008 update of the Aspergillus nidulans genome annotation: a community effort.</title>
        <authorList>
            <person name="Wortman J.R."/>
            <person name="Gilsenan J.M."/>
            <person name="Joardar V."/>
            <person name="Deegan J."/>
            <person name="Clutterbuck J."/>
            <person name="Andersen M.R."/>
            <person name="Archer D."/>
            <person name="Bencina M."/>
            <person name="Braus G."/>
            <person name="Coutinho P."/>
            <person name="von Dohren H."/>
            <person name="Doonan J."/>
            <person name="Driessen A.J."/>
            <person name="Durek P."/>
            <person name="Espeso E."/>
            <person name="Fekete E."/>
            <person name="Flipphi M."/>
            <person name="Estrada C.G."/>
            <person name="Geysens S."/>
            <person name="Goldman G."/>
            <person name="de Groot P.W."/>
            <person name="Hansen K."/>
            <person name="Harris S.D."/>
            <person name="Heinekamp T."/>
            <person name="Helmstaedt K."/>
            <person name="Henrissat B."/>
            <person name="Hofmann G."/>
            <person name="Homan T."/>
            <person name="Horio T."/>
            <person name="Horiuchi H."/>
            <person name="James S."/>
            <person name="Jones M."/>
            <person name="Karaffa L."/>
            <person name="Karanyi Z."/>
            <person name="Kato M."/>
            <person name="Keller N."/>
            <person name="Kelly D.E."/>
            <person name="Kiel J.A."/>
            <person name="Kim J.M."/>
            <person name="van der Klei I.J."/>
            <person name="Klis F.M."/>
            <person name="Kovalchuk A."/>
            <person name="Krasevec N."/>
            <person name="Kubicek C.P."/>
            <person name="Liu B."/>
            <person name="Maccabe A."/>
            <person name="Meyer V."/>
            <person name="Mirabito P."/>
            <person name="Miskei M."/>
            <person name="Mos M."/>
            <person name="Mullins J."/>
            <person name="Nelson D.R."/>
            <person name="Nielsen J."/>
            <person name="Oakley B.R."/>
            <person name="Osmani S.A."/>
            <person name="Pakula T."/>
            <person name="Paszewski A."/>
            <person name="Paulsen I."/>
            <person name="Pilsyk S."/>
            <person name="Pocsi I."/>
            <person name="Punt P.J."/>
            <person name="Ram A.F."/>
            <person name="Ren Q."/>
            <person name="Robellet X."/>
            <person name="Robson G."/>
            <person name="Seiboth B."/>
            <person name="van Solingen P."/>
            <person name="Specht T."/>
            <person name="Sun J."/>
            <person name="Taheri-Talesh N."/>
            <person name="Takeshita N."/>
            <person name="Ussery D."/>
            <person name="vanKuyk P.A."/>
            <person name="Visser H."/>
            <person name="van de Vondervoort P.J."/>
            <person name="de Vries R.P."/>
            <person name="Walton J."/>
            <person name="Xiang X."/>
            <person name="Xiong Y."/>
            <person name="Zeng A.P."/>
            <person name="Brandt B.W."/>
            <person name="Cornell M.J."/>
            <person name="van den Hondel C.A."/>
            <person name="Visser J."/>
            <person name="Oliver S.G."/>
            <person name="Turner G."/>
        </authorList>
    </citation>
    <scope>GENOME REANNOTATION</scope>
    <source>
        <strain>FGSC A4 / ATCC 38163 / CBS 112.46 / NRRL 194 / M139</strain>
    </source>
</reference>
<name>Y0929_EMENI</name>
<organism>
    <name type="scientific">Emericella nidulans (strain FGSC A4 / ATCC 38163 / CBS 112.46 / NRRL 194 / M139)</name>
    <name type="common">Aspergillus nidulans</name>
    <dbReference type="NCBI Taxonomy" id="227321"/>
    <lineage>
        <taxon>Eukaryota</taxon>
        <taxon>Fungi</taxon>
        <taxon>Dikarya</taxon>
        <taxon>Ascomycota</taxon>
        <taxon>Pezizomycotina</taxon>
        <taxon>Eurotiomycetes</taxon>
        <taxon>Eurotiomycetidae</taxon>
        <taxon>Eurotiales</taxon>
        <taxon>Aspergillaceae</taxon>
        <taxon>Aspergillus</taxon>
        <taxon>Aspergillus subgen. Nidulantes</taxon>
    </lineage>
</organism>
<sequence>MAAQSYYNGAYNSPPAYEQHDHTSDQFNRVSPRPSPSPVAYNNAPYYQSDDPHDPNSLRYSQQSIGSDNGAYVAGGRINEHDQYAENIPLKSANPYGNDHPPQPWMQQPTHYAPDPGMMEPQVPMRQKKKGFFQKKIAYVTYILTIAQIIVFIVELVKMGQLTGSPIQTKPQFNPMVGPSAYVQINMGARYTPCMKNVPGVQNATQQVLFPCPNATTTDSDCSLSELCGFDGVPNPHPGGSLDDKPAPDQWFRFIIPMFLHSGFVHIGFNLLVQMTMGADMERMIGWWRYGLVYLSSGIWGFVLGGNYAGQGEASCGCSGALFGILALFVLDLLYGWNDRQNPWVELIIMVLGIAVSFVLGLLPGLDNFSHLGGFTMGLALGLCVMRSPNALRERIGLARSPYVAMSGGVAAENADPDQNKTSTGSNIGGLGKFNPKGFFAGRKPLWWAWWLVRLGALVAVLIGFILLIVNFYKYPSSNCSWCYRFSCLPVNGWCDQGNLFSR</sequence>
<accession>C8VCL5</accession>
<accession>Q5AWJ3</accession>
<protein>
    <recommendedName>
        <fullName evidence="4">Rhomboid-type serine protease 2</fullName>
        <ecNumber evidence="1">3.4.21.105</ecNumber>
    </recommendedName>
    <alternativeName>
        <fullName evidence="4">Rhomboid protein 2</fullName>
    </alternativeName>
    <alternativeName>
        <fullName evidence="4">Uncharacterized rhomboid protein AN10929</fullName>
    </alternativeName>
</protein>
<gene>
    <name type="ORF">AN10929</name>
</gene>
<dbReference type="EC" id="3.4.21.105" evidence="1"/>
<dbReference type="EMBL" id="AACD01000128">
    <property type="protein sequence ID" value="EAA61708.1"/>
    <property type="status" value="ALT_SEQ"/>
    <property type="molecule type" value="Genomic_DNA"/>
</dbReference>
<dbReference type="EMBL" id="BN001304">
    <property type="protein sequence ID" value="CBF78591.1"/>
    <property type="molecule type" value="Genomic_DNA"/>
</dbReference>
<dbReference type="RefSeq" id="XP_680606.1">
    <property type="nucleotide sequence ID" value="XM_675514.1"/>
</dbReference>
<dbReference type="SMR" id="C8VCL5"/>
<dbReference type="STRING" id="227321.C8VCL5"/>
<dbReference type="EnsemblFungi" id="CBF78591">
    <property type="protein sequence ID" value="CBF78591"/>
    <property type="gene ID" value="ANIA_10929"/>
</dbReference>
<dbReference type="VEuPathDB" id="FungiDB:AN10929"/>
<dbReference type="eggNOG" id="KOG2289">
    <property type="taxonomic scope" value="Eukaryota"/>
</dbReference>
<dbReference type="HOGENOM" id="CLU_010291_0_0_1"/>
<dbReference type="InParanoid" id="C8VCL5"/>
<dbReference type="OMA" id="PIMIKPQ"/>
<dbReference type="OrthoDB" id="2146116at2759"/>
<dbReference type="Proteomes" id="UP000000560">
    <property type="component" value="Chromosome IV"/>
</dbReference>
<dbReference type="GO" id="GO:0016020">
    <property type="term" value="C:membrane"/>
    <property type="evidence" value="ECO:0007669"/>
    <property type="project" value="UniProtKB-SubCell"/>
</dbReference>
<dbReference type="GO" id="GO:0004252">
    <property type="term" value="F:serine-type endopeptidase activity"/>
    <property type="evidence" value="ECO:0007669"/>
    <property type="project" value="InterPro"/>
</dbReference>
<dbReference type="GO" id="GO:0006508">
    <property type="term" value="P:proteolysis"/>
    <property type="evidence" value="ECO:0007669"/>
    <property type="project" value="UniProtKB-KW"/>
</dbReference>
<dbReference type="Gene3D" id="1.20.1540.10">
    <property type="entry name" value="Rhomboid-like"/>
    <property type="match status" value="1"/>
</dbReference>
<dbReference type="InterPro" id="IPR002610">
    <property type="entry name" value="Peptidase_S54_rhomboid-like"/>
</dbReference>
<dbReference type="InterPro" id="IPR022764">
    <property type="entry name" value="Peptidase_S54_rhomboid_dom"/>
</dbReference>
<dbReference type="InterPro" id="IPR035952">
    <property type="entry name" value="Rhomboid-like_sf"/>
</dbReference>
<dbReference type="PANTHER" id="PTHR22936:SF69">
    <property type="entry name" value="RHOMBOID-LIKE PROTEIN"/>
    <property type="match status" value="1"/>
</dbReference>
<dbReference type="PANTHER" id="PTHR22936">
    <property type="entry name" value="RHOMBOID-RELATED"/>
    <property type="match status" value="1"/>
</dbReference>
<dbReference type="Pfam" id="PF01694">
    <property type="entry name" value="Rhomboid"/>
    <property type="match status" value="1"/>
</dbReference>
<dbReference type="SUPFAM" id="SSF144091">
    <property type="entry name" value="Rhomboid-like"/>
    <property type="match status" value="1"/>
</dbReference>
<evidence type="ECO:0000250" key="1">
    <source>
        <dbReference type="UniProtKB" id="O74926"/>
    </source>
</evidence>
<evidence type="ECO:0000255" key="2"/>
<evidence type="ECO:0000256" key="3">
    <source>
        <dbReference type="SAM" id="MobiDB-lite"/>
    </source>
</evidence>
<evidence type="ECO:0000305" key="4"/>
<comment type="function">
    <text evidence="1">Probable rhomboid-type serine protease that catalyzes intramembrane proteolysis.</text>
</comment>
<comment type="catalytic activity">
    <reaction evidence="1">
        <text>Cleaves type-1 transmembrane domains using a catalytic dyad composed of serine and histidine that are contributed by different transmembrane domains.</text>
        <dbReference type="EC" id="3.4.21.105"/>
    </reaction>
</comment>
<comment type="subcellular location">
    <subcellularLocation>
        <location evidence="4">Membrane</location>
        <topology evidence="4">Multi-pass membrane protein</topology>
    </subcellularLocation>
</comment>
<comment type="similarity">
    <text evidence="4">Belongs to the peptidase S54 family.</text>
</comment>
<comment type="sequence caution" evidence="4">
    <conflict type="erroneous gene model prediction">
        <sequence resource="EMBL-CDS" id="EAA61708"/>
    </conflict>
    <text>The predicted gene AN7337 has been split into 2 genes: AN10929 and AN10934.</text>
</comment>
<keyword id="KW-0378">Hydrolase</keyword>
<keyword id="KW-0472">Membrane</keyword>
<keyword id="KW-0645">Protease</keyword>
<keyword id="KW-1185">Reference proteome</keyword>
<keyword id="KW-0720">Serine protease</keyword>
<keyword id="KW-0812">Transmembrane</keyword>
<keyword id="KW-1133">Transmembrane helix</keyword>